<comment type="function">
    <text>Catalyzes the reversible oxidation of malate to oxaloacetate.</text>
</comment>
<comment type="catalytic activity">
    <reaction evidence="2">
        <text>(S)-malate + NAD(+) = oxaloacetate + NADH + H(+)</text>
        <dbReference type="Rhea" id="RHEA:21432"/>
        <dbReference type="ChEBI" id="CHEBI:15378"/>
        <dbReference type="ChEBI" id="CHEBI:15589"/>
        <dbReference type="ChEBI" id="CHEBI:16452"/>
        <dbReference type="ChEBI" id="CHEBI:57540"/>
        <dbReference type="ChEBI" id="CHEBI:57945"/>
        <dbReference type="EC" id="1.1.1.37"/>
    </reaction>
</comment>
<comment type="biophysicochemical properties">
    <phDependence>
        <text>Optimum pH is 9.5-10.0 for malate dehydrogenation, and 7.5-8.0 for oxaloacetate reduction.</text>
    </phDependence>
    <temperatureDependence>
        <text>Optimum temperature is 35 degrees Celsius.</text>
    </temperatureDependence>
</comment>
<comment type="subunit">
    <text evidence="1">Homodimer.</text>
</comment>
<comment type="similarity">
    <text evidence="3">Belongs to the LDH/MDH superfamily. MDH type 1 family.</text>
</comment>
<protein>
    <recommendedName>
        <fullName>Malate dehydrogenase</fullName>
        <ecNumber>1.1.1.37</ecNumber>
    </recommendedName>
</protein>
<organism>
    <name type="scientific">Moritella sp. (strain 5710)</name>
    <dbReference type="NCBI Taxonomy" id="246794"/>
    <lineage>
        <taxon>Bacteria</taxon>
        <taxon>Pseudomonadati</taxon>
        <taxon>Pseudomonadota</taxon>
        <taxon>Gammaproteobacteria</taxon>
        <taxon>Alteromonadales</taxon>
        <taxon>Moritellaceae</taxon>
        <taxon>Moritella</taxon>
    </lineage>
</organism>
<sequence length="312" mass="31985">MKVAVLGAAGGIGQALALLLKTQLPAGSDLSLYDIAPVTPGVAVDLSHIPTDVTIAGFAGMDPTDALVGADVVLISAGVARKPGMDRSDLFNINAGIIKNLAGKCAEVCPNACIGIITNPVNTTVPIAAEVLKQAGVYDKRKLFGITTLDVIRSETFVSALKGISLADVEVPVIGGHSGVTILPLLSQVKGVEFTAEEVVALTARIQNAGTEVVEAKAGGGSATLSMGQAAARFGLSLVRALQGEKGIVECTYVDGGSEHATFFAQPVLLGKNGVEEVLAYGELSEFETNARDAMLEELKANITLGEEFVAG</sequence>
<accession>P48364</accession>
<reference key="1">
    <citation type="journal article" date="1996" name="FEMS Microbiol. Lett.">
        <title>Characterization of malate dehydrogenase from deep-sea psychrophilic Vibrio sp. strain no. 5710 and cloning of its gene.</title>
        <authorList>
            <person name="Ohkuma M."/>
            <person name="Ohtoko K."/>
            <person name="Takada N."/>
            <person name="Hamamoto T."/>
            <person name="Usami R."/>
            <person name="Kudo T."/>
            <person name="Horikoshi K."/>
        </authorList>
    </citation>
    <scope>NUCLEOTIDE SEQUENCE [GENOMIC DNA]</scope>
</reference>
<reference key="2">
    <citation type="journal article" date="2004" name="FEMS Microbiol. Lett.">
        <title>Differences in malate dehydrogenases from the obligately piezophilic deep-sea bacterium Moritella sp. strain 2D2 and the psychrophilic bacterium Moritella sp. strain 5710.</title>
        <authorList>
            <person name="Saito R."/>
            <person name="Nakayama A."/>
        </authorList>
    </citation>
    <scope>CATALYTIC ACTIVITY</scope>
    <scope>MUTAGENESIS OF GLN-229</scope>
</reference>
<evidence type="ECO:0000250" key="1"/>
<evidence type="ECO:0000269" key="2">
    <source>
    </source>
</evidence>
<evidence type="ECO:0000305" key="3"/>
<keyword id="KW-0520">NAD</keyword>
<keyword id="KW-0560">Oxidoreductase</keyword>
<keyword id="KW-0816">Tricarboxylic acid cycle</keyword>
<gene>
    <name type="primary">mdh</name>
</gene>
<dbReference type="EC" id="1.1.1.37"/>
<dbReference type="EMBL" id="D78194">
    <property type="protein sequence ID" value="BAA11301.1"/>
    <property type="molecule type" value="Genomic_DNA"/>
</dbReference>
<dbReference type="SMR" id="P48364"/>
<dbReference type="GO" id="GO:0005737">
    <property type="term" value="C:cytoplasm"/>
    <property type="evidence" value="ECO:0007669"/>
    <property type="project" value="TreeGrafter"/>
</dbReference>
<dbReference type="GO" id="GO:0030060">
    <property type="term" value="F:L-malate dehydrogenase (NAD+) activity"/>
    <property type="evidence" value="ECO:0007669"/>
    <property type="project" value="UniProtKB-UniRule"/>
</dbReference>
<dbReference type="GO" id="GO:0006108">
    <property type="term" value="P:malate metabolic process"/>
    <property type="evidence" value="ECO:0007669"/>
    <property type="project" value="InterPro"/>
</dbReference>
<dbReference type="GO" id="GO:0006099">
    <property type="term" value="P:tricarboxylic acid cycle"/>
    <property type="evidence" value="ECO:0007669"/>
    <property type="project" value="UniProtKB-UniRule"/>
</dbReference>
<dbReference type="CDD" id="cd01337">
    <property type="entry name" value="MDH_glyoxysomal_mitochondrial"/>
    <property type="match status" value="1"/>
</dbReference>
<dbReference type="FunFam" id="3.40.50.720:FF:000017">
    <property type="entry name" value="Malate dehydrogenase"/>
    <property type="match status" value="1"/>
</dbReference>
<dbReference type="FunFam" id="3.90.110.10:FF:000001">
    <property type="entry name" value="Malate dehydrogenase"/>
    <property type="match status" value="1"/>
</dbReference>
<dbReference type="Gene3D" id="3.90.110.10">
    <property type="entry name" value="Lactate dehydrogenase/glycoside hydrolase, family 4, C-terminal"/>
    <property type="match status" value="1"/>
</dbReference>
<dbReference type="Gene3D" id="3.40.50.720">
    <property type="entry name" value="NAD(P)-binding Rossmann-like Domain"/>
    <property type="match status" value="1"/>
</dbReference>
<dbReference type="HAMAP" id="MF_01516">
    <property type="entry name" value="Malate_dehydrog_1"/>
    <property type="match status" value="1"/>
</dbReference>
<dbReference type="InterPro" id="IPR001557">
    <property type="entry name" value="L-lactate/malate_DH"/>
</dbReference>
<dbReference type="InterPro" id="IPR022383">
    <property type="entry name" value="Lactate/malate_DH_C"/>
</dbReference>
<dbReference type="InterPro" id="IPR001236">
    <property type="entry name" value="Lactate/malate_DH_N"/>
</dbReference>
<dbReference type="InterPro" id="IPR015955">
    <property type="entry name" value="Lactate_DH/Glyco_Ohase_4_C"/>
</dbReference>
<dbReference type="InterPro" id="IPR001252">
    <property type="entry name" value="Malate_DH_AS"/>
</dbReference>
<dbReference type="InterPro" id="IPR010097">
    <property type="entry name" value="Malate_DH_type1"/>
</dbReference>
<dbReference type="InterPro" id="IPR023958">
    <property type="entry name" value="Malate_DH_type1_bac"/>
</dbReference>
<dbReference type="InterPro" id="IPR036291">
    <property type="entry name" value="NAD(P)-bd_dom_sf"/>
</dbReference>
<dbReference type="NCBIfam" id="TIGR01772">
    <property type="entry name" value="MDH_euk_gproteo"/>
    <property type="match status" value="1"/>
</dbReference>
<dbReference type="PANTHER" id="PTHR11540">
    <property type="entry name" value="MALATE AND LACTATE DEHYDROGENASE"/>
    <property type="match status" value="1"/>
</dbReference>
<dbReference type="PANTHER" id="PTHR11540:SF16">
    <property type="entry name" value="MALATE DEHYDROGENASE, MITOCHONDRIAL"/>
    <property type="match status" value="1"/>
</dbReference>
<dbReference type="Pfam" id="PF02866">
    <property type="entry name" value="Ldh_1_C"/>
    <property type="match status" value="1"/>
</dbReference>
<dbReference type="Pfam" id="PF00056">
    <property type="entry name" value="Ldh_1_N"/>
    <property type="match status" value="1"/>
</dbReference>
<dbReference type="PIRSF" id="PIRSF000102">
    <property type="entry name" value="Lac_mal_DH"/>
    <property type="match status" value="1"/>
</dbReference>
<dbReference type="SUPFAM" id="SSF56327">
    <property type="entry name" value="LDH C-terminal domain-like"/>
    <property type="match status" value="1"/>
</dbReference>
<dbReference type="SUPFAM" id="SSF51735">
    <property type="entry name" value="NAD(P)-binding Rossmann-fold domains"/>
    <property type="match status" value="1"/>
</dbReference>
<dbReference type="PROSITE" id="PS00068">
    <property type="entry name" value="MDH"/>
    <property type="match status" value="1"/>
</dbReference>
<proteinExistence type="evidence at protein level"/>
<feature type="chain" id="PRO_0000113316" description="Malate dehydrogenase">
    <location>
        <begin position="1"/>
        <end position="312"/>
    </location>
</feature>
<feature type="active site" description="Proton acceptor" evidence="1">
    <location>
        <position position="177"/>
    </location>
</feature>
<feature type="binding site" evidence="1">
    <location>
        <begin position="7"/>
        <end position="13"/>
    </location>
    <ligand>
        <name>NAD(+)</name>
        <dbReference type="ChEBI" id="CHEBI:57540"/>
    </ligand>
</feature>
<feature type="binding site" evidence="1">
    <location>
        <position position="34"/>
    </location>
    <ligand>
        <name>NAD(+)</name>
        <dbReference type="ChEBI" id="CHEBI:57540"/>
    </ligand>
</feature>
<feature type="binding site" evidence="1">
    <location>
        <position position="81"/>
    </location>
    <ligand>
        <name>substrate</name>
    </ligand>
</feature>
<feature type="binding site" evidence="1">
    <location>
        <position position="87"/>
    </location>
    <ligand>
        <name>substrate</name>
    </ligand>
</feature>
<feature type="binding site" evidence="1">
    <location>
        <position position="94"/>
    </location>
    <ligand>
        <name>NAD(+)</name>
        <dbReference type="ChEBI" id="CHEBI:57540"/>
    </ligand>
</feature>
<feature type="binding site" evidence="1">
    <location>
        <begin position="117"/>
        <end position="119"/>
    </location>
    <ligand>
        <name>NAD(+)</name>
        <dbReference type="ChEBI" id="CHEBI:57540"/>
    </ligand>
</feature>
<feature type="binding site" evidence="1">
    <location>
        <position position="119"/>
    </location>
    <ligand>
        <name>substrate</name>
    </ligand>
</feature>
<feature type="binding site" evidence="1">
    <location>
        <position position="153"/>
    </location>
    <ligand>
        <name>substrate</name>
    </ligand>
</feature>
<feature type="binding site" evidence="1">
    <location>
        <position position="227"/>
    </location>
    <ligand>
        <name>NAD(+)</name>
        <dbReference type="ChEBI" id="CHEBI:57540"/>
    </ligand>
</feature>
<feature type="mutagenesis site" description="Increases the thermal stability." evidence="2">
    <original>Q</original>
    <variation>H</variation>
    <location>
        <position position="229"/>
    </location>
</feature>
<name>MDH_MORS5</name>